<reference key="1">
    <citation type="submission" date="2008-05" db="EMBL/GenBank/DDBJ databases">
        <title>Genome sequence of Helicobacter pylori from the remote Amazon: traces of Asian ancestry of the first Americans.</title>
        <authorList>
            <person name="Kersulyte D."/>
            <person name="Kalia A."/>
            <person name="Gilman R.H."/>
            <person name="Berg D.E."/>
        </authorList>
    </citation>
    <scope>NUCLEOTIDE SEQUENCE [LARGE SCALE GENOMIC DNA]</scope>
    <source>
        <strain>Shi470</strain>
    </source>
</reference>
<evidence type="ECO:0000255" key="1">
    <source>
        <dbReference type="HAMAP-Rule" id="MF_00171"/>
    </source>
</evidence>
<dbReference type="EC" id="5.4.99.12" evidence="1"/>
<dbReference type="EMBL" id="CP001072">
    <property type="protein sequence ID" value="ACD48530.1"/>
    <property type="molecule type" value="Genomic_DNA"/>
</dbReference>
<dbReference type="RefSeq" id="WP_001203329.1">
    <property type="nucleotide sequence ID" value="NC_010698.2"/>
</dbReference>
<dbReference type="SMR" id="B2UUJ8"/>
<dbReference type="KEGG" id="hps:HPSH_05610"/>
<dbReference type="HOGENOM" id="CLU_014673_0_1_7"/>
<dbReference type="GO" id="GO:0003723">
    <property type="term" value="F:RNA binding"/>
    <property type="evidence" value="ECO:0007669"/>
    <property type="project" value="InterPro"/>
</dbReference>
<dbReference type="GO" id="GO:0160147">
    <property type="term" value="F:tRNA pseudouridine(38-40) synthase activity"/>
    <property type="evidence" value="ECO:0007669"/>
    <property type="project" value="UniProtKB-EC"/>
</dbReference>
<dbReference type="GO" id="GO:0031119">
    <property type="term" value="P:tRNA pseudouridine synthesis"/>
    <property type="evidence" value="ECO:0007669"/>
    <property type="project" value="UniProtKB-UniRule"/>
</dbReference>
<dbReference type="CDD" id="cd02570">
    <property type="entry name" value="PseudoU_synth_EcTruA"/>
    <property type="match status" value="1"/>
</dbReference>
<dbReference type="FunFam" id="3.30.70.580:FF:000023">
    <property type="entry name" value="tRNA pseudouridine synthase A"/>
    <property type="match status" value="1"/>
</dbReference>
<dbReference type="FunFam" id="3.30.70.660:FF:000029">
    <property type="entry name" value="tRNA pseudouridine synthase A"/>
    <property type="match status" value="1"/>
</dbReference>
<dbReference type="Gene3D" id="3.30.70.660">
    <property type="entry name" value="Pseudouridine synthase I, catalytic domain, C-terminal subdomain"/>
    <property type="match status" value="1"/>
</dbReference>
<dbReference type="Gene3D" id="3.30.70.580">
    <property type="entry name" value="Pseudouridine synthase I, catalytic domain, N-terminal subdomain"/>
    <property type="match status" value="1"/>
</dbReference>
<dbReference type="HAMAP" id="MF_00171">
    <property type="entry name" value="TruA"/>
    <property type="match status" value="1"/>
</dbReference>
<dbReference type="InterPro" id="IPR020103">
    <property type="entry name" value="PsdUridine_synth_cat_dom_sf"/>
</dbReference>
<dbReference type="InterPro" id="IPR001406">
    <property type="entry name" value="PsdUridine_synth_TruA"/>
</dbReference>
<dbReference type="InterPro" id="IPR020097">
    <property type="entry name" value="PsdUridine_synth_TruA_a/b_dom"/>
</dbReference>
<dbReference type="InterPro" id="IPR020095">
    <property type="entry name" value="PsdUridine_synth_TruA_C"/>
</dbReference>
<dbReference type="InterPro" id="IPR020094">
    <property type="entry name" value="TruA/RsuA/RluB/E/F_N"/>
</dbReference>
<dbReference type="NCBIfam" id="TIGR00071">
    <property type="entry name" value="hisT_truA"/>
    <property type="match status" value="1"/>
</dbReference>
<dbReference type="PANTHER" id="PTHR11142">
    <property type="entry name" value="PSEUDOURIDYLATE SYNTHASE"/>
    <property type="match status" value="1"/>
</dbReference>
<dbReference type="PANTHER" id="PTHR11142:SF0">
    <property type="entry name" value="TRNA PSEUDOURIDINE SYNTHASE-LIKE 1"/>
    <property type="match status" value="1"/>
</dbReference>
<dbReference type="Pfam" id="PF01416">
    <property type="entry name" value="PseudoU_synth_1"/>
    <property type="match status" value="2"/>
</dbReference>
<dbReference type="PIRSF" id="PIRSF001430">
    <property type="entry name" value="tRNA_psdUrid_synth"/>
    <property type="match status" value="1"/>
</dbReference>
<dbReference type="SUPFAM" id="SSF55120">
    <property type="entry name" value="Pseudouridine synthase"/>
    <property type="match status" value="1"/>
</dbReference>
<organism>
    <name type="scientific">Helicobacter pylori (strain Shi470)</name>
    <dbReference type="NCBI Taxonomy" id="512562"/>
    <lineage>
        <taxon>Bacteria</taxon>
        <taxon>Pseudomonadati</taxon>
        <taxon>Campylobacterota</taxon>
        <taxon>Epsilonproteobacteria</taxon>
        <taxon>Campylobacterales</taxon>
        <taxon>Helicobacteraceae</taxon>
        <taxon>Helicobacter</taxon>
    </lineage>
</organism>
<proteinExistence type="inferred from homology"/>
<comment type="function">
    <text evidence="1">Formation of pseudouridine at positions 38, 39 and 40 in the anticodon stem and loop of transfer RNAs.</text>
</comment>
<comment type="catalytic activity">
    <reaction evidence="1">
        <text>uridine(38/39/40) in tRNA = pseudouridine(38/39/40) in tRNA</text>
        <dbReference type="Rhea" id="RHEA:22376"/>
        <dbReference type="Rhea" id="RHEA-COMP:10085"/>
        <dbReference type="Rhea" id="RHEA-COMP:10087"/>
        <dbReference type="ChEBI" id="CHEBI:65314"/>
        <dbReference type="ChEBI" id="CHEBI:65315"/>
        <dbReference type="EC" id="5.4.99.12"/>
    </reaction>
</comment>
<comment type="subunit">
    <text evidence="1">Homodimer.</text>
</comment>
<comment type="similarity">
    <text evidence="1">Belongs to the tRNA pseudouridine synthase TruA family.</text>
</comment>
<gene>
    <name evidence="1" type="primary">truA</name>
    <name type="ordered locus">HPSH_05610</name>
</gene>
<accession>B2UUJ8</accession>
<protein>
    <recommendedName>
        <fullName evidence="1">tRNA pseudouridine synthase A</fullName>
        <ecNumber evidence="1">5.4.99.12</ecNumber>
    </recommendedName>
    <alternativeName>
        <fullName evidence="1">tRNA pseudouridine(38-40) synthase</fullName>
    </alternativeName>
    <alternativeName>
        <fullName evidence="1">tRNA pseudouridylate synthase I</fullName>
    </alternativeName>
    <alternativeName>
        <fullName evidence="1">tRNA-uridine isomerase I</fullName>
    </alternativeName>
</protein>
<name>TRUA_HELPS</name>
<keyword id="KW-0413">Isomerase</keyword>
<keyword id="KW-0819">tRNA processing</keyword>
<feature type="chain" id="PRO_1000097749" description="tRNA pseudouridine synthase A">
    <location>
        <begin position="1"/>
        <end position="242"/>
    </location>
</feature>
<feature type="active site" description="Nucleophile" evidence="1">
    <location>
        <position position="51"/>
    </location>
</feature>
<feature type="binding site" evidence="1">
    <location>
        <position position="107"/>
    </location>
    <ligand>
        <name>substrate</name>
    </ligand>
</feature>
<sequence>MRCFKATIAYDGAYFLGYAKQPNKLGVQDKIESALNALGIKSVVVAAGRTDKGVHANNQVLSFYAQKHWNAAKLFYYLAPKLAPHVVLKKLEEKNFHARFDAQKRAYRYLLTKNLKTPFLAPYIACGDYGSLDALNTALKQFTGKHDFSMFKKEGGATTNPKRAIFNAFAYKTFIIGHECVVFKIIGDAFLRSSVRLIVQACVQYSLEKITLAEIQAQIHNIKATIRTPIMANGLYLHRVYY</sequence>